<evidence type="ECO:0000256" key="1">
    <source>
        <dbReference type="SAM" id="MobiDB-lite"/>
    </source>
</evidence>
<gene>
    <name type="ORF">DDB_G0288037</name>
</gene>
<organism>
    <name type="scientific">Dictyostelium discoideum</name>
    <name type="common">Social amoeba</name>
    <dbReference type="NCBI Taxonomy" id="44689"/>
    <lineage>
        <taxon>Eukaryota</taxon>
        <taxon>Amoebozoa</taxon>
        <taxon>Evosea</taxon>
        <taxon>Eumycetozoa</taxon>
        <taxon>Dictyostelia</taxon>
        <taxon>Dictyosteliales</taxon>
        <taxon>Dictyosteliaceae</taxon>
        <taxon>Dictyostelium</taxon>
    </lineage>
</organism>
<protein>
    <recommendedName>
        <fullName>Putative uncharacterized protein DDB_G0288037</fullName>
    </recommendedName>
</protein>
<name>Y7749_DICDI</name>
<dbReference type="EMBL" id="AAFI02000107">
    <property type="protein sequence ID" value="EAL63444.1"/>
    <property type="molecule type" value="Genomic_DNA"/>
</dbReference>
<dbReference type="RefSeq" id="XP_636950.1">
    <property type="nucleotide sequence ID" value="XM_631858.1"/>
</dbReference>
<dbReference type="PaxDb" id="44689-DDB0187749"/>
<dbReference type="EnsemblProtists" id="EAL63444">
    <property type="protein sequence ID" value="EAL63444"/>
    <property type="gene ID" value="DDB_G0288037"/>
</dbReference>
<dbReference type="GeneID" id="8626425"/>
<dbReference type="KEGG" id="ddi:DDB_G0288037"/>
<dbReference type="dictyBase" id="DDB_G0288037"/>
<dbReference type="HOGENOM" id="CLU_1762190_0_0_1"/>
<dbReference type="InParanoid" id="Q54JI1"/>
<dbReference type="PRO" id="PR:Q54JI1"/>
<dbReference type="Proteomes" id="UP000002195">
    <property type="component" value="Chromosome 5"/>
</dbReference>
<proteinExistence type="predicted"/>
<feature type="chain" id="PRO_0000346999" description="Putative uncharacterized protein DDB_G0288037">
    <location>
        <begin position="1"/>
        <end position="148"/>
    </location>
</feature>
<feature type="region of interest" description="Disordered" evidence="1">
    <location>
        <begin position="37"/>
        <end position="99"/>
    </location>
</feature>
<feature type="compositionally biased region" description="Low complexity" evidence="1">
    <location>
        <begin position="37"/>
        <end position="94"/>
    </location>
</feature>
<keyword id="KW-1185">Reference proteome</keyword>
<reference key="1">
    <citation type="journal article" date="2005" name="Nature">
        <title>The genome of the social amoeba Dictyostelium discoideum.</title>
        <authorList>
            <person name="Eichinger L."/>
            <person name="Pachebat J.A."/>
            <person name="Gloeckner G."/>
            <person name="Rajandream M.A."/>
            <person name="Sucgang R."/>
            <person name="Berriman M."/>
            <person name="Song J."/>
            <person name="Olsen R."/>
            <person name="Szafranski K."/>
            <person name="Xu Q."/>
            <person name="Tunggal B."/>
            <person name="Kummerfeld S."/>
            <person name="Madera M."/>
            <person name="Konfortov B.A."/>
            <person name="Rivero F."/>
            <person name="Bankier A.T."/>
            <person name="Lehmann R."/>
            <person name="Hamlin N."/>
            <person name="Davies R."/>
            <person name="Gaudet P."/>
            <person name="Fey P."/>
            <person name="Pilcher K."/>
            <person name="Chen G."/>
            <person name="Saunders D."/>
            <person name="Sodergren E.J."/>
            <person name="Davis P."/>
            <person name="Kerhornou A."/>
            <person name="Nie X."/>
            <person name="Hall N."/>
            <person name="Anjard C."/>
            <person name="Hemphill L."/>
            <person name="Bason N."/>
            <person name="Farbrother P."/>
            <person name="Desany B."/>
            <person name="Just E."/>
            <person name="Morio T."/>
            <person name="Rost R."/>
            <person name="Churcher C.M."/>
            <person name="Cooper J."/>
            <person name="Haydock S."/>
            <person name="van Driessche N."/>
            <person name="Cronin A."/>
            <person name="Goodhead I."/>
            <person name="Muzny D.M."/>
            <person name="Mourier T."/>
            <person name="Pain A."/>
            <person name="Lu M."/>
            <person name="Harper D."/>
            <person name="Lindsay R."/>
            <person name="Hauser H."/>
            <person name="James K.D."/>
            <person name="Quiles M."/>
            <person name="Madan Babu M."/>
            <person name="Saito T."/>
            <person name="Buchrieser C."/>
            <person name="Wardroper A."/>
            <person name="Felder M."/>
            <person name="Thangavelu M."/>
            <person name="Johnson D."/>
            <person name="Knights A."/>
            <person name="Loulseged H."/>
            <person name="Mungall K.L."/>
            <person name="Oliver K."/>
            <person name="Price C."/>
            <person name="Quail M.A."/>
            <person name="Urushihara H."/>
            <person name="Hernandez J."/>
            <person name="Rabbinowitsch E."/>
            <person name="Steffen D."/>
            <person name="Sanders M."/>
            <person name="Ma J."/>
            <person name="Kohara Y."/>
            <person name="Sharp S."/>
            <person name="Simmonds M.N."/>
            <person name="Spiegler S."/>
            <person name="Tivey A."/>
            <person name="Sugano S."/>
            <person name="White B."/>
            <person name="Walker D."/>
            <person name="Woodward J.R."/>
            <person name="Winckler T."/>
            <person name="Tanaka Y."/>
            <person name="Shaulsky G."/>
            <person name="Schleicher M."/>
            <person name="Weinstock G.M."/>
            <person name="Rosenthal A."/>
            <person name="Cox E.C."/>
            <person name="Chisholm R.L."/>
            <person name="Gibbs R.A."/>
            <person name="Loomis W.F."/>
            <person name="Platzer M."/>
            <person name="Kay R.R."/>
            <person name="Williams J.G."/>
            <person name="Dear P.H."/>
            <person name="Noegel A.A."/>
            <person name="Barrell B.G."/>
            <person name="Kuspa A."/>
        </authorList>
    </citation>
    <scope>NUCLEOTIDE SEQUENCE [LARGE SCALE GENOMIC DNA]</scope>
    <source>
        <strain>AX4</strain>
    </source>
</reference>
<sequence length="148" mass="17140">MSSFNDYFEIQNVENLLPTLKLCKQYFFKNKQDSIVNNNNYNNNNKNNNNNNNNNNNNNNNNNNNNNNNYINSCNSNNNNNNNNNNTKNNNINSRTDKNNNGDNKFNFINEIVNNNISTYTPYNILNSCHGSSLFEIKPQPITCKDIN</sequence>
<accession>Q54JI1</accession>